<dbReference type="EC" id="2.7.7.6" evidence="1"/>
<dbReference type="EMBL" id="CP000812">
    <property type="protein sequence ID" value="ABV33044.1"/>
    <property type="molecule type" value="Genomic_DNA"/>
</dbReference>
<dbReference type="RefSeq" id="WP_012002525.1">
    <property type="nucleotide sequence ID" value="NZ_BSDV01000001.1"/>
</dbReference>
<dbReference type="SMR" id="A8F4G0"/>
<dbReference type="STRING" id="416591.Tlet_0477"/>
<dbReference type="KEGG" id="tle:Tlet_0477"/>
<dbReference type="eggNOG" id="COG0085">
    <property type="taxonomic scope" value="Bacteria"/>
</dbReference>
<dbReference type="HOGENOM" id="CLU_000524_4_3_0"/>
<dbReference type="OrthoDB" id="9803954at2"/>
<dbReference type="Proteomes" id="UP000002016">
    <property type="component" value="Chromosome"/>
</dbReference>
<dbReference type="GO" id="GO:0000428">
    <property type="term" value="C:DNA-directed RNA polymerase complex"/>
    <property type="evidence" value="ECO:0007669"/>
    <property type="project" value="UniProtKB-KW"/>
</dbReference>
<dbReference type="GO" id="GO:0003677">
    <property type="term" value="F:DNA binding"/>
    <property type="evidence" value="ECO:0007669"/>
    <property type="project" value="UniProtKB-UniRule"/>
</dbReference>
<dbReference type="GO" id="GO:0003899">
    <property type="term" value="F:DNA-directed RNA polymerase activity"/>
    <property type="evidence" value="ECO:0007669"/>
    <property type="project" value="UniProtKB-UniRule"/>
</dbReference>
<dbReference type="GO" id="GO:0032549">
    <property type="term" value="F:ribonucleoside binding"/>
    <property type="evidence" value="ECO:0007669"/>
    <property type="project" value="InterPro"/>
</dbReference>
<dbReference type="GO" id="GO:0006351">
    <property type="term" value="P:DNA-templated transcription"/>
    <property type="evidence" value="ECO:0007669"/>
    <property type="project" value="UniProtKB-UniRule"/>
</dbReference>
<dbReference type="CDD" id="cd00653">
    <property type="entry name" value="RNA_pol_B_RPB2"/>
    <property type="match status" value="1"/>
</dbReference>
<dbReference type="Gene3D" id="2.40.50.100">
    <property type="match status" value="1"/>
</dbReference>
<dbReference type="Gene3D" id="2.40.50.150">
    <property type="match status" value="1"/>
</dbReference>
<dbReference type="Gene3D" id="3.90.1100.10">
    <property type="match status" value="2"/>
</dbReference>
<dbReference type="Gene3D" id="2.30.150.10">
    <property type="entry name" value="DNA-directed RNA polymerase, beta subunit, external 1 domain"/>
    <property type="match status" value="1"/>
</dbReference>
<dbReference type="Gene3D" id="2.40.270.10">
    <property type="entry name" value="DNA-directed RNA polymerase, subunit 2, domain 6"/>
    <property type="match status" value="1"/>
</dbReference>
<dbReference type="Gene3D" id="3.90.1800.10">
    <property type="entry name" value="RNA polymerase alpha subunit dimerisation domain"/>
    <property type="match status" value="1"/>
</dbReference>
<dbReference type="Gene3D" id="3.90.1110.10">
    <property type="entry name" value="RNA polymerase Rpb2, domain 2"/>
    <property type="match status" value="1"/>
</dbReference>
<dbReference type="HAMAP" id="MF_01321">
    <property type="entry name" value="RNApol_bact_RpoB"/>
    <property type="match status" value="1"/>
</dbReference>
<dbReference type="InterPro" id="IPR042107">
    <property type="entry name" value="DNA-dir_RNA_pol_bsu_ext_1_sf"/>
</dbReference>
<dbReference type="InterPro" id="IPR019462">
    <property type="entry name" value="DNA-dir_RNA_pol_bsu_external_1"/>
</dbReference>
<dbReference type="InterPro" id="IPR015712">
    <property type="entry name" value="DNA-dir_RNA_pol_su2"/>
</dbReference>
<dbReference type="InterPro" id="IPR007120">
    <property type="entry name" value="DNA-dir_RNAP_su2_dom"/>
</dbReference>
<dbReference type="InterPro" id="IPR037033">
    <property type="entry name" value="DNA-dir_RNAP_su2_hyb_sf"/>
</dbReference>
<dbReference type="InterPro" id="IPR010243">
    <property type="entry name" value="RNA_pol_bsu_bac"/>
</dbReference>
<dbReference type="InterPro" id="IPR007121">
    <property type="entry name" value="RNA_pol_bsu_CS"/>
</dbReference>
<dbReference type="InterPro" id="IPR007644">
    <property type="entry name" value="RNA_pol_bsu_protrusion"/>
</dbReference>
<dbReference type="InterPro" id="IPR007642">
    <property type="entry name" value="RNA_pol_Rpb2_2"/>
</dbReference>
<dbReference type="InterPro" id="IPR037034">
    <property type="entry name" value="RNA_pol_Rpb2_2_sf"/>
</dbReference>
<dbReference type="InterPro" id="IPR007645">
    <property type="entry name" value="RNA_pol_Rpb2_3"/>
</dbReference>
<dbReference type="InterPro" id="IPR007641">
    <property type="entry name" value="RNA_pol_Rpb2_7"/>
</dbReference>
<dbReference type="InterPro" id="IPR014724">
    <property type="entry name" value="RNA_pol_RPB2_OB-fold"/>
</dbReference>
<dbReference type="NCBIfam" id="NF001616">
    <property type="entry name" value="PRK00405.1"/>
    <property type="match status" value="1"/>
</dbReference>
<dbReference type="NCBIfam" id="TIGR02013">
    <property type="entry name" value="rpoB"/>
    <property type="match status" value="1"/>
</dbReference>
<dbReference type="PANTHER" id="PTHR20856">
    <property type="entry name" value="DNA-DIRECTED RNA POLYMERASE I SUBUNIT 2"/>
    <property type="match status" value="1"/>
</dbReference>
<dbReference type="Pfam" id="PF04563">
    <property type="entry name" value="RNA_pol_Rpb2_1"/>
    <property type="match status" value="1"/>
</dbReference>
<dbReference type="Pfam" id="PF04561">
    <property type="entry name" value="RNA_pol_Rpb2_2"/>
    <property type="match status" value="1"/>
</dbReference>
<dbReference type="Pfam" id="PF04565">
    <property type="entry name" value="RNA_pol_Rpb2_3"/>
    <property type="match status" value="1"/>
</dbReference>
<dbReference type="Pfam" id="PF10385">
    <property type="entry name" value="RNA_pol_Rpb2_45"/>
    <property type="match status" value="1"/>
</dbReference>
<dbReference type="Pfam" id="PF00562">
    <property type="entry name" value="RNA_pol_Rpb2_6"/>
    <property type="match status" value="1"/>
</dbReference>
<dbReference type="Pfam" id="PF04560">
    <property type="entry name" value="RNA_pol_Rpb2_7"/>
    <property type="match status" value="1"/>
</dbReference>
<dbReference type="SUPFAM" id="SSF64484">
    <property type="entry name" value="beta and beta-prime subunits of DNA dependent RNA-polymerase"/>
    <property type="match status" value="1"/>
</dbReference>
<dbReference type="PROSITE" id="PS01166">
    <property type="entry name" value="RNA_POL_BETA"/>
    <property type="match status" value="1"/>
</dbReference>
<feature type="chain" id="PRO_0000329194" description="DNA-directed RNA polymerase subunit beta">
    <location>
        <begin position="1"/>
        <end position="1172"/>
    </location>
</feature>
<reference key="1">
    <citation type="submission" date="2007-08" db="EMBL/GenBank/DDBJ databases">
        <title>Complete sequence of Thermotoga lettingae TMO.</title>
        <authorList>
            <consortium name="US DOE Joint Genome Institute"/>
            <person name="Copeland A."/>
            <person name="Lucas S."/>
            <person name="Lapidus A."/>
            <person name="Barry K."/>
            <person name="Glavina del Rio T."/>
            <person name="Dalin E."/>
            <person name="Tice H."/>
            <person name="Pitluck S."/>
            <person name="Foster B."/>
            <person name="Bruce D."/>
            <person name="Schmutz J."/>
            <person name="Larimer F."/>
            <person name="Land M."/>
            <person name="Hauser L."/>
            <person name="Kyrpides N."/>
            <person name="Mikhailova N."/>
            <person name="Nelson K."/>
            <person name="Gogarten J.P."/>
            <person name="Noll K."/>
            <person name="Richardson P."/>
        </authorList>
    </citation>
    <scope>NUCLEOTIDE SEQUENCE [LARGE SCALE GENOMIC DNA]</scope>
    <source>
        <strain>ATCC BAA-301 / DSM 14385 / NBRC 107922 / TMO</strain>
    </source>
</reference>
<keyword id="KW-0240">DNA-directed RNA polymerase</keyword>
<keyword id="KW-0548">Nucleotidyltransferase</keyword>
<keyword id="KW-1185">Reference proteome</keyword>
<keyword id="KW-0804">Transcription</keyword>
<keyword id="KW-0808">Transferase</keyword>
<accession>A8F4G0</accession>
<name>RPOB_PSELT</name>
<evidence type="ECO:0000255" key="1">
    <source>
        <dbReference type="HAMAP-Rule" id="MF_01321"/>
    </source>
</evidence>
<gene>
    <name evidence="1" type="primary">rpoB</name>
    <name type="ordered locus">Tlet_0477</name>
</gene>
<proteinExistence type="inferred from homology"/>
<organism>
    <name type="scientific">Pseudothermotoga lettingae (strain ATCC BAA-301 / DSM 14385 / NBRC 107922 / TMO)</name>
    <name type="common">Thermotoga lettingae</name>
    <dbReference type="NCBI Taxonomy" id="416591"/>
    <lineage>
        <taxon>Bacteria</taxon>
        <taxon>Thermotogati</taxon>
        <taxon>Thermotogota</taxon>
        <taxon>Thermotogae</taxon>
        <taxon>Thermotogales</taxon>
        <taxon>Thermotogaceae</taxon>
        <taxon>Pseudothermotoga</taxon>
    </lineage>
</organism>
<comment type="function">
    <text evidence="1">DNA-dependent RNA polymerase catalyzes the transcription of DNA into RNA using the four ribonucleoside triphosphates as substrates.</text>
</comment>
<comment type="catalytic activity">
    <reaction evidence="1">
        <text>RNA(n) + a ribonucleoside 5'-triphosphate = RNA(n+1) + diphosphate</text>
        <dbReference type="Rhea" id="RHEA:21248"/>
        <dbReference type="Rhea" id="RHEA-COMP:14527"/>
        <dbReference type="Rhea" id="RHEA-COMP:17342"/>
        <dbReference type="ChEBI" id="CHEBI:33019"/>
        <dbReference type="ChEBI" id="CHEBI:61557"/>
        <dbReference type="ChEBI" id="CHEBI:140395"/>
        <dbReference type="EC" id="2.7.7.6"/>
    </reaction>
</comment>
<comment type="subunit">
    <text evidence="1">The RNAP catalytic core consists of 2 alpha, 1 beta, 1 beta' and 1 omega subunit. When a sigma factor is associated with the core the holoenzyme is formed, which can initiate transcription.</text>
</comment>
<comment type="similarity">
    <text evidence="1">Belongs to the RNA polymerase beta chain family.</text>
</comment>
<protein>
    <recommendedName>
        <fullName evidence="1">DNA-directed RNA polymerase subunit beta</fullName>
        <shortName evidence="1">RNAP subunit beta</shortName>
        <ecNumber evidence="1">2.7.7.6</ecNumber>
    </recommendedName>
    <alternativeName>
        <fullName evidence="1">RNA polymerase subunit beta</fullName>
    </alternativeName>
    <alternativeName>
        <fullName evidence="1">Transcriptase subunit beta</fullName>
    </alternativeName>
</protein>
<sequence>MRTVCYGKRERLTFGRIHDAVKVPNLISIQIDSYKDFLENGLIEVLKKFSPITSQPHKGDLKKGEKGFVLEFVSTKVGQPNAPVEECKQKGLTYTVPVYTTVRITDVNTGEMREEEAFLGSIPHMTENGTFIINGAERVIVSQLVRAPGVYFVDEIPKTQVVSPIYVAHFLPVRGAWLELLYYSADNMFYARIDRKRRINLFLLFKALGFTDDLEILDLFPDPIDADDEYTMEKAVGSIILHDVVLDGKKIVERGGVLTKAASQAILESKIATVVRAHPAAQKTLEKMVDTYGEVDSSKAYVEIFRKLKPGEIPRVNTAKAYLTSLYFSTERFELSDVGRYKINKRLTQAYRRYLAQVKGLPEEEVESVEYNPEDPVLTPMDIVLASRYLLDVSKNPEIMDTKDHLGNKRVRTVGELIKLEFERAFARAQRLIQERLTLYASLDKISIQSLINVKTIIAGINQFFATSPLSQFMEQVNPLAELTHKRRLTAVGPGGLKRERARFEVRDVHHSHYGRMCPIETPEGANIGLITSLAVYANIDKFGFLTTPYRKVVNGVVTSEIVYLTADEEEHYNIAPCTIKIDKDGRILDERVPVRFMERLQFVEKNKVQFMDVSTKQIVSVSTSLIPFLEHDDANRALMGSNMQRQAVPLVKPEAPFVATGVEYDAALYSGYVVQAKYSGRVKKVDSRKIVIERMDENGKPVLKNGKPVLDEYRLMKFMRTNQDTTVNQRPIVDIGDIVKAGDVIADGPATDMGELALGKNVLVAFMPWEGYNFEDAILVSEELLEEDTFTSIHIEVYETQARDTRLGPEEITVDIPNVSKEALRNLDENGIVRVGAYVGPQDILVGKVTPKGEGETTPEEKIIRSVFGERGKDVKDTSLRLPHGTDGRVIDVKVFDKDEETDLGAGVNKLVKVYVACRKTLEVGDKLAGRHGNKGVVSKILPKEDMPFLPDGTPVQLVLSPLGVPSRMNVGQILETHLGWLAKLTRNWFATPVFDGAKENEILPWLYEERRAVGLEEGDSDNEPSGKVVLRDGRTGESFAEPIVVGYIYMMKLVHIAKDKIHARSTGPYSLIHQQPLGGKAQFGGQRFGEMEVWALEAHGAAHTLNEMLTIKSDDIKGRNEVYKAILKGKNIPEPGIPESFRVLIKELRGLALDIRVYDENGNEIDIDRV</sequence>